<feature type="chain" id="PRO_0000074454" description="Ion-translocating oxidoreductase complex subunit D">
    <location>
        <begin position="1"/>
        <end position="352"/>
    </location>
</feature>
<feature type="transmembrane region" description="Helical" evidence="1">
    <location>
        <begin position="20"/>
        <end position="40"/>
    </location>
</feature>
<feature type="transmembrane region" description="Helical" evidence="1">
    <location>
        <begin position="42"/>
        <end position="62"/>
    </location>
</feature>
<feature type="transmembrane region" description="Helical" evidence="1">
    <location>
        <begin position="78"/>
        <end position="109"/>
    </location>
</feature>
<feature type="transmembrane region" description="Helical" evidence="1">
    <location>
        <begin position="123"/>
        <end position="143"/>
    </location>
</feature>
<feature type="transmembrane region" description="Helical" evidence="1">
    <location>
        <begin position="148"/>
        <end position="168"/>
    </location>
</feature>
<feature type="transmembrane region" description="Helical" evidence="1">
    <location>
        <begin position="214"/>
        <end position="234"/>
    </location>
</feature>
<feature type="transmembrane region" description="Helical" evidence="1">
    <location>
        <begin position="242"/>
        <end position="262"/>
    </location>
</feature>
<feature type="transmembrane region" description="Helical" evidence="1">
    <location>
        <begin position="267"/>
        <end position="287"/>
    </location>
</feature>
<feature type="transmembrane region" description="Helical" evidence="1">
    <location>
        <begin position="301"/>
        <end position="321"/>
    </location>
</feature>
<feature type="transmembrane region" description="Helical" evidence="1">
    <location>
        <begin position="322"/>
        <end position="342"/>
    </location>
</feature>
<feature type="modified residue" description="FMN phosphoryl threonine" evidence="1">
    <location>
        <position position="187"/>
    </location>
</feature>
<accession>P58325</accession>
<comment type="function">
    <text evidence="1">Part of a membrane-bound complex that couples electron transfer with translocation of ions across the membrane. Required to maintain the reduced state of SoxR.</text>
</comment>
<comment type="cofactor">
    <cofactor evidence="1">
        <name>FMN</name>
        <dbReference type="ChEBI" id="CHEBI:58210"/>
    </cofactor>
</comment>
<comment type="subunit">
    <text evidence="1">The complex is composed of six subunits: RsxA, RsxB, RsxC, RsxD, RsxE and RsxG.</text>
</comment>
<comment type="subcellular location">
    <subcellularLocation>
        <location evidence="1">Cell inner membrane</location>
        <topology evidence="1">Multi-pass membrane protein</topology>
    </subcellularLocation>
</comment>
<comment type="similarity">
    <text evidence="1">Belongs to the NqrB/RnfD family.</text>
</comment>
<protein>
    <recommendedName>
        <fullName evidence="1">Ion-translocating oxidoreductase complex subunit D</fullName>
        <ecNumber evidence="1">7.-.-.-</ecNumber>
    </recommendedName>
    <alternativeName>
        <fullName evidence="1">Rsx electron transport complex subunit D</fullName>
    </alternativeName>
</protein>
<name>RSXD_ECO57</name>
<dbReference type="EC" id="7.-.-.-" evidence="1"/>
<dbReference type="EMBL" id="AE005174">
    <property type="protein sequence ID" value="AAG56619.1"/>
    <property type="molecule type" value="Genomic_DNA"/>
</dbReference>
<dbReference type="EMBL" id="BA000007">
    <property type="protein sequence ID" value="BAB35762.1"/>
    <property type="molecule type" value="Genomic_DNA"/>
</dbReference>
<dbReference type="PIR" id="C90921">
    <property type="entry name" value="C90921"/>
</dbReference>
<dbReference type="PIR" id="G85769">
    <property type="entry name" value="G85769"/>
</dbReference>
<dbReference type="RefSeq" id="NP_310366.1">
    <property type="nucleotide sequence ID" value="NC_002695.1"/>
</dbReference>
<dbReference type="RefSeq" id="WP_000231928.1">
    <property type="nucleotide sequence ID" value="NZ_VOAI01000007.1"/>
</dbReference>
<dbReference type="SMR" id="P58325"/>
<dbReference type="STRING" id="155864.Z2639"/>
<dbReference type="GeneID" id="913023"/>
<dbReference type="KEGG" id="ece:Z2639"/>
<dbReference type="KEGG" id="ecs:ECs_2339"/>
<dbReference type="PATRIC" id="fig|386585.9.peg.2448"/>
<dbReference type="eggNOG" id="COG4658">
    <property type="taxonomic scope" value="Bacteria"/>
</dbReference>
<dbReference type="HOGENOM" id="CLU_042020_0_0_6"/>
<dbReference type="OMA" id="RLWGGYP"/>
<dbReference type="Proteomes" id="UP000000558">
    <property type="component" value="Chromosome"/>
</dbReference>
<dbReference type="Proteomes" id="UP000002519">
    <property type="component" value="Chromosome"/>
</dbReference>
<dbReference type="GO" id="GO:0005886">
    <property type="term" value="C:plasma membrane"/>
    <property type="evidence" value="ECO:0007669"/>
    <property type="project" value="UniProtKB-SubCell"/>
</dbReference>
<dbReference type="GO" id="GO:0022900">
    <property type="term" value="P:electron transport chain"/>
    <property type="evidence" value="ECO:0007669"/>
    <property type="project" value="UniProtKB-UniRule"/>
</dbReference>
<dbReference type="GO" id="GO:0055085">
    <property type="term" value="P:transmembrane transport"/>
    <property type="evidence" value="ECO:0007669"/>
    <property type="project" value="InterPro"/>
</dbReference>
<dbReference type="HAMAP" id="MF_00462">
    <property type="entry name" value="RsxD_RnfD"/>
    <property type="match status" value="1"/>
</dbReference>
<dbReference type="InterPro" id="IPR004338">
    <property type="entry name" value="NqrB/RnfD"/>
</dbReference>
<dbReference type="InterPro" id="IPR011303">
    <property type="entry name" value="RnfD_bac"/>
</dbReference>
<dbReference type="NCBIfam" id="NF002011">
    <property type="entry name" value="PRK00816.1"/>
    <property type="match status" value="1"/>
</dbReference>
<dbReference type="NCBIfam" id="TIGR01946">
    <property type="entry name" value="rnfD"/>
    <property type="match status" value="1"/>
</dbReference>
<dbReference type="PANTHER" id="PTHR30578">
    <property type="entry name" value="ELECTRON TRANSPORT COMPLEX PROTEIN RNFD"/>
    <property type="match status" value="1"/>
</dbReference>
<dbReference type="PANTHER" id="PTHR30578:SF0">
    <property type="entry name" value="ION-TRANSLOCATING OXIDOREDUCTASE COMPLEX SUBUNIT D"/>
    <property type="match status" value="1"/>
</dbReference>
<dbReference type="Pfam" id="PF03116">
    <property type="entry name" value="NQR2_RnfD_RnfE"/>
    <property type="match status" value="1"/>
</dbReference>
<sequence>MVFRIASSPYTHNQRQTSRIMLLVLLAAVPGIAAQLWFFGWGTLVQILLASVSALLAEALVLKLRKQSVAATLKDNSALLTGLLLAVSIPPLAPWWMVVLGTVFAVIIAKQLYGGLGQNPFNPAMIGYVVLLISFPVQMTSWLPPHEIAVNIPGFIDAIQVIFSGHTASGGDMNTLRLGIDGISQATPLDTFKTSVRAGHSVEQIMQYPIYSGILAGAGWQWVNLAWLAGGVWLLWQKAIRWHIPLSFLVTLALCATLGWLFSPETLAAPQIHLLSGATMLGAFFILTDPVTASTTNRGRLIFGALAGLLVWLIRSFGGYPDGVAFAVLLANITVPLIDYYTRPRVYGHRKG</sequence>
<keyword id="KW-0997">Cell inner membrane</keyword>
<keyword id="KW-1003">Cell membrane</keyword>
<keyword id="KW-0249">Electron transport</keyword>
<keyword id="KW-0285">Flavoprotein</keyword>
<keyword id="KW-0288">FMN</keyword>
<keyword id="KW-0472">Membrane</keyword>
<keyword id="KW-0597">Phosphoprotein</keyword>
<keyword id="KW-1185">Reference proteome</keyword>
<keyword id="KW-1278">Translocase</keyword>
<keyword id="KW-0812">Transmembrane</keyword>
<keyword id="KW-1133">Transmembrane helix</keyword>
<keyword id="KW-0813">Transport</keyword>
<gene>
    <name evidence="1" type="primary">rsxD</name>
    <name type="ordered locus">Z2639</name>
    <name type="ordered locus">ECs2339</name>
</gene>
<reference key="1">
    <citation type="journal article" date="2001" name="Nature">
        <title>Genome sequence of enterohaemorrhagic Escherichia coli O157:H7.</title>
        <authorList>
            <person name="Perna N.T."/>
            <person name="Plunkett G. III"/>
            <person name="Burland V."/>
            <person name="Mau B."/>
            <person name="Glasner J.D."/>
            <person name="Rose D.J."/>
            <person name="Mayhew G.F."/>
            <person name="Evans P.S."/>
            <person name="Gregor J."/>
            <person name="Kirkpatrick H.A."/>
            <person name="Posfai G."/>
            <person name="Hackett J."/>
            <person name="Klink S."/>
            <person name="Boutin A."/>
            <person name="Shao Y."/>
            <person name="Miller L."/>
            <person name="Grotbeck E.J."/>
            <person name="Davis N.W."/>
            <person name="Lim A."/>
            <person name="Dimalanta E.T."/>
            <person name="Potamousis K."/>
            <person name="Apodaca J."/>
            <person name="Anantharaman T.S."/>
            <person name="Lin J."/>
            <person name="Yen G."/>
            <person name="Schwartz D.C."/>
            <person name="Welch R.A."/>
            <person name="Blattner F.R."/>
        </authorList>
    </citation>
    <scope>NUCLEOTIDE SEQUENCE [LARGE SCALE GENOMIC DNA]</scope>
    <source>
        <strain>O157:H7 / EDL933 / ATCC 700927 / EHEC</strain>
    </source>
</reference>
<reference key="2">
    <citation type="journal article" date="2001" name="DNA Res.">
        <title>Complete genome sequence of enterohemorrhagic Escherichia coli O157:H7 and genomic comparison with a laboratory strain K-12.</title>
        <authorList>
            <person name="Hayashi T."/>
            <person name="Makino K."/>
            <person name="Ohnishi M."/>
            <person name="Kurokawa K."/>
            <person name="Ishii K."/>
            <person name="Yokoyama K."/>
            <person name="Han C.-G."/>
            <person name="Ohtsubo E."/>
            <person name="Nakayama K."/>
            <person name="Murata T."/>
            <person name="Tanaka M."/>
            <person name="Tobe T."/>
            <person name="Iida T."/>
            <person name="Takami H."/>
            <person name="Honda T."/>
            <person name="Sasakawa C."/>
            <person name="Ogasawara N."/>
            <person name="Yasunaga T."/>
            <person name="Kuhara S."/>
            <person name="Shiba T."/>
            <person name="Hattori M."/>
            <person name="Shinagawa H."/>
        </authorList>
    </citation>
    <scope>NUCLEOTIDE SEQUENCE [LARGE SCALE GENOMIC DNA]</scope>
    <source>
        <strain>O157:H7 / Sakai / RIMD 0509952 / EHEC</strain>
    </source>
</reference>
<proteinExistence type="inferred from homology"/>
<evidence type="ECO:0000255" key="1">
    <source>
        <dbReference type="HAMAP-Rule" id="MF_00462"/>
    </source>
</evidence>
<organism>
    <name type="scientific">Escherichia coli O157:H7</name>
    <dbReference type="NCBI Taxonomy" id="83334"/>
    <lineage>
        <taxon>Bacteria</taxon>
        <taxon>Pseudomonadati</taxon>
        <taxon>Pseudomonadota</taxon>
        <taxon>Gammaproteobacteria</taxon>
        <taxon>Enterobacterales</taxon>
        <taxon>Enterobacteriaceae</taxon>
        <taxon>Escherichia</taxon>
    </lineage>
</organism>